<protein>
    <recommendedName>
        <fullName>Histidine--tRNA ligase</fullName>
        <ecNumber>6.1.1.21</ecNumber>
    </recommendedName>
    <alternativeName>
        <fullName>Histidyl-tRNA synthetase</fullName>
        <shortName>HisRS</shortName>
    </alternativeName>
</protein>
<feature type="chain" id="PRO_0000136216" description="Histidine--tRNA ligase">
    <location>
        <begin position="1"/>
        <end position="423"/>
    </location>
</feature>
<proteinExistence type="inferred from homology"/>
<name>SYH_PASMU</name>
<gene>
    <name type="primary">hisS</name>
    <name type="ordered locus">PM2011</name>
</gene>
<organism>
    <name type="scientific">Pasteurella multocida (strain Pm70)</name>
    <dbReference type="NCBI Taxonomy" id="272843"/>
    <lineage>
        <taxon>Bacteria</taxon>
        <taxon>Pseudomonadati</taxon>
        <taxon>Pseudomonadota</taxon>
        <taxon>Gammaproteobacteria</taxon>
        <taxon>Pasteurellales</taxon>
        <taxon>Pasteurellaceae</taxon>
        <taxon>Pasteurella</taxon>
    </lineage>
</organism>
<comment type="catalytic activity">
    <reaction>
        <text>tRNA(His) + L-histidine + ATP = L-histidyl-tRNA(His) + AMP + diphosphate + H(+)</text>
        <dbReference type="Rhea" id="RHEA:17313"/>
        <dbReference type="Rhea" id="RHEA-COMP:9665"/>
        <dbReference type="Rhea" id="RHEA-COMP:9689"/>
        <dbReference type="ChEBI" id="CHEBI:15378"/>
        <dbReference type="ChEBI" id="CHEBI:30616"/>
        <dbReference type="ChEBI" id="CHEBI:33019"/>
        <dbReference type="ChEBI" id="CHEBI:57595"/>
        <dbReference type="ChEBI" id="CHEBI:78442"/>
        <dbReference type="ChEBI" id="CHEBI:78527"/>
        <dbReference type="ChEBI" id="CHEBI:456215"/>
        <dbReference type="EC" id="6.1.1.21"/>
    </reaction>
</comment>
<comment type="subunit">
    <text evidence="1">Homodimer.</text>
</comment>
<comment type="subcellular location">
    <subcellularLocation>
        <location evidence="1">Cytoplasm</location>
    </subcellularLocation>
</comment>
<comment type="similarity">
    <text evidence="2">Belongs to the class-II aminoacyl-tRNA synthetase family.</text>
</comment>
<evidence type="ECO:0000250" key="1"/>
<evidence type="ECO:0000305" key="2"/>
<reference key="1">
    <citation type="journal article" date="2001" name="Proc. Natl. Acad. Sci. U.S.A.">
        <title>Complete genomic sequence of Pasteurella multocida Pm70.</title>
        <authorList>
            <person name="May B.J."/>
            <person name="Zhang Q."/>
            <person name="Li L.L."/>
            <person name="Paustian M.L."/>
            <person name="Whittam T.S."/>
            <person name="Kapur V."/>
        </authorList>
    </citation>
    <scope>NUCLEOTIDE SEQUENCE [LARGE SCALE GENOMIC DNA]</scope>
    <source>
        <strain>Pm70</strain>
    </source>
</reference>
<dbReference type="EC" id="6.1.1.21"/>
<dbReference type="EMBL" id="AE004439">
    <property type="protein sequence ID" value="AAK04095.1"/>
    <property type="molecule type" value="Genomic_DNA"/>
</dbReference>
<dbReference type="RefSeq" id="WP_010907448.1">
    <property type="nucleotide sequence ID" value="NC_002663.1"/>
</dbReference>
<dbReference type="SMR" id="P57988"/>
<dbReference type="STRING" id="272843.PM2011"/>
<dbReference type="EnsemblBacteria" id="AAK04095">
    <property type="protein sequence ID" value="AAK04095"/>
    <property type="gene ID" value="PM2011"/>
</dbReference>
<dbReference type="KEGG" id="pmu:PM2011"/>
<dbReference type="PATRIC" id="fig|272843.6.peg.2034"/>
<dbReference type="HOGENOM" id="CLU_025113_1_1_6"/>
<dbReference type="OrthoDB" id="9800814at2"/>
<dbReference type="Proteomes" id="UP000000809">
    <property type="component" value="Chromosome"/>
</dbReference>
<dbReference type="GO" id="GO:0005737">
    <property type="term" value="C:cytoplasm"/>
    <property type="evidence" value="ECO:0007669"/>
    <property type="project" value="UniProtKB-SubCell"/>
</dbReference>
<dbReference type="GO" id="GO:0005524">
    <property type="term" value="F:ATP binding"/>
    <property type="evidence" value="ECO:0007669"/>
    <property type="project" value="UniProtKB-UniRule"/>
</dbReference>
<dbReference type="GO" id="GO:0004821">
    <property type="term" value="F:histidine-tRNA ligase activity"/>
    <property type="evidence" value="ECO:0007669"/>
    <property type="project" value="UniProtKB-UniRule"/>
</dbReference>
<dbReference type="GO" id="GO:0006427">
    <property type="term" value="P:histidyl-tRNA aminoacylation"/>
    <property type="evidence" value="ECO:0007669"/>
    <property type="project" value="UniProtKB-UniRule"/>
</dbReference>
<dbReference type="CDD" id="cd00773">
    <property type="entry name" value="HisRS-like_core"/>
    <property type="match status" value="1"/>
</dbReference>
<dbReference type="CDD" id="cd00859">
    <property type="entry name" value="HisRS_anticodon"/>
    <property type="match status" value="1"/>
</dbReference>
<dbReference type="FunFam" id="3.30.930.10:FF:000005">
    <property type="entry name" value="Histidine--tRNA ligase"/>
    <property type="match status" value="1"/>
</dbReference>
<dbReference type="Gene3D" id="3.40.50.800">
    <property type="entry name" value="Anticodon-binding domain"/>
    <property type="match status" value="1"/>
</dbReference>
<dbReference type="Gene3D" id="3.30.930.10">
    <property type="entry name" value="Bira Bifunctional Protein, Domain 2"/>
    <property type="match status" value="1"/>
</dbReference>
<dbReference type="HAMAP" id="MF_00127">
    <property type="entry name" value="His_tRNA_synth"/>
    <property type="match status" value="1"/>
</dbReference>
<dbReference type="InterPro" id="IPR006195">
    <property type="entry name" value="aa-tRNA-synth_II"/>
</dbReference>
<dbReference type="InterPro" id="IPR045864">
    <property type="entry name" value="aa-tRNA-synth_II/BPL/LPL"/>
</dbReference>
<dbReference type="InterPro" id="IPR004154">
    <property type="entry name" value="Anticodon-bd"/>
</dbReference>
<dbReference type="InterPro" id="IPR036621">
    <property type="entry name" value="Anticodon-bd_dom_sf"/>
</dbReference>
<dbReference type="InterPro" id="IPR015807">
    <property type="entry name" value="His-tRNA-ligase"/>
</dbReference>
<dbReference type="InterPro" id="IPR041715">
    <property type="entry name" value="HisRS-like_core"/>
</dbReference>
<dbReference type="InterPro" id="IPR004516">
    <property type="entry name" value="HisRS/HisZ"/>
</dbReference>
<dbReference type="InterPro" id="IPR033656">
    <property type="entry name" value="HisRS_anticodon"/>
</dbReference>
<dbReference type="NCBIfam" id="TIGR00442">
    <property type="entry name" value="hisS"/>
    <property type="match status" value="1"/>
</dbReference>
<dbReference type="PANTHER" id="PTHR43707:SF1">
    <property type="entry name" value="HISTIDINE--TRNA LIGASE, MITOCHONDRIAL-RELATED"/>
    <property type="match status" value="1"/>
</dbReference>
<dbReference type="PANTHER" id="PTHR43707">
    <property type="entry name" value="HISTIDYL-TRNA SYNTHETASE"/>
    <property type="match status" value="1"/>
</dbReference>
<dbReference type="Pfam" id="PF03129">
    <property type="entry name" value="HGTP_anticodon"/>
    <property type="match status" value="1"/>
</dbReference>
<dbReference type="Pfam" id="PF13393">
    <property type="entry name" value="tRNA-synt_His"/>
    <property type="match status" value="1"/>
</dbReference>
<dbReference type="PIRSF" id="PIRSF001549">
    <property type="entry name" value="His-tRNA_synth"/>
    <property type="match status" value="1"/>
</dbReference>
<dbReference type="SUPFAM" id="SSF52954">
    <property type="entry name" value="Class II aaRS ABD-related"/>
    <property type="match status" value="1"/>
</dbReference>
<dbReference type="SUPFAM" id="SSF55681">
    <property type="entry name" value="Class II aaRS and biotin synthetases"/>
    <property type="match status" value="1"/>
</dbReference>
<dbReference type="PROSITE" id="PS50862">
    <property type="entry name" value="AA_TRNA_LIGASE_II"/>
    <property type="match status" value="1"/>
</dbReference>
<sequence length="423" mass="47530">MAKTIQAIRGMNDCSPTESPLWQWVEGKVRSVLQNYGYSEVRMPIVESTPLFARAIGEVTDVVSKEMYTFWDNDEQLTLRPEGTAGCVRAAIEHGWIYNQEQRLWYMGPMFRHERPQKGRYRQFHQAGVEVFGIPNPEIDAELIMLTARLWKELGIAEHVTLQLNSIGSLEARKNYRSALVAFLQQHVDLLSEEEKERLEKNPLRILDTKNQALQEVLNDAPKLLAYLDDDSREHFAQLCALLDAVGIQYEVNPKLVRGLDYYNKTVFEWVTSALGAQGTVCGGGRYDGLVEQLGGHATTGVGFAMGLERLVLLVQEVNQSIRLPSAVDIYVVYQGEGTTLAAFQLAETLRTELPQLRVMTHCSGGNFKKQFKRADKSGATLALVIGESEVQNQQVVVKHLLGGAEQQTLALDDIVDYIKNNF</sequence>
<accession>P57988</accession>
<keyword id="KW-0030">Aminoacyl-tRNA synthetase</keyword>
<keyword id="KW-0067">ATP-binding</keyword>
<keyword id="KW-0963">Cytoplasm</keyword>
<keyword id="KW-0436">Ligase</keyword>
<keyword id="KW-0547">Nucleotide-binding</keyword>
<keyword id="KW-0648">Protein biosynthesis</keyword>
<keyword id="KW-1185">Reference proteome</keyword>